<gene>
    <name evidence="11" type="primary">Rhot1</name>
    <name evidence="11" type="synonym">Rnf135</name>
</gene>
<evidence type="ECO:0000250" key="1">
    <source>
        <dbReference type="UniProtKB" id="Q8BG51"/>
    </source>
</evidence>
<evidence type="ECO:0000250" key="2">
    <source>
        <dbReference type="UniProtKB" id="Q8IXI2"/>
    </source>
</evidence>
<evidence type="ECO:0000255" key="3"/>
<evidence type="ECO:0000255" key="4">
    <source>
        <dbReference type="PIRNR" id="PIRNR037488"/>
    </source>
</evidence>
<evidence type="ECO:0000255" key="5">
    <source>
        <dbReference type="PROSITE-ProRule" id="PRU00448"/>
    </source>
</evidence>
<evidence type="ECO:0000255" key="6">
    <source>
        <dbReference type="PROSITE-ProRule" id="PRU00757"/>
    </source>
</evidence>
<evidence type="ECO:0000269" key="7">
    <source>
    </source>
</evidence>
<evidence type="ECO:0000305" key="8"/>
<evidence type="ECO:0000312" key="9">
    <source>
        <dbReference type="EMBL" id="AAI29124.1"/>
    </source>
</evidence>
<evidence type="ECO:0000312" key="10">
    <source>
        <dbReference type="EMBL" id="EDM05415.1"/>
    </source>
</evidence>
<evidence type="ECO:0000312" key="11">
    <source>
        <dbReference type="RGD" id="1307023"/>
    </source>
</evidence>
<sequence>MRAGRVRPLRASDMKKDVRILLVGEPRVGKTSLIMSLVSEEFPEEVPPRAEEITIPADVTPERVPTHIVDYSEAEQSDEQLHQEISQANVICIVYAVNNKHSIDKVTSRWIPLINERTDKDSRLPLILVGNKSDLVEYSSMETILPIMNQYTEIETCVECSAKNLKNISELFYYAQKAVLHPTGPLYCPEEKEMKPACIKALTRIFKISDQDNDGTLNDAELNFFQRICFNTPLAPQALEDVKNVVRKHLSDGVADSGLTLRGFLFLHTLFIQRGRHETTWTVLRRFGYDDDLDLTPEYLFPLLKIPPDCTTELNHHAYLFLQSTFDKHDLDRDCALSPDELKDLFQVFPYIPWGPDVNNTVCTNESGWITYQGFLSQWTLTTYLDVQRCLEYLGYLGYSILTEQESQASAITVTRDKKIDLQKKQTQRNVFRCNVIGVKGCGKTGVLQSLLGRNLMRQKKIRDDHKSYYAINTVYVYGQEKYLLLHDISESEFLTEAEIVCDVVCLVYDVTNPKSFEYCARIFKQHFMDSRIPCLIVAAKSDLHEVKQEHSVSPTDFCRKHKMPPPQAFTCNTADAPSKDIFVKLTTMAMYPHVTQADLKSSTFWLRASFGATVFAVVGFAMYRALLKQR</sequence>
<accession>A1L1L6</accession>
<name>MIRO1_RAT</name>
<proteinExistence type="evidence at protein level"/>
<feature type="chain" id="PRO_0000462175" description="Mitochondrial Rho GTPase">
    <location>
        <begin position="1"/>
        <end position="631"/>
    </location>
</feature>
<feature type="topological domain" description="Cytoplasmic" evidence="3">
    <location>
        <begin position="1"/>
        <end position="605"/>
    </location>
</feature>
<feature type="transmembrane region" description="Helical; Anchor for type IV membrane protein" evidence="3">
    <location>
        <begin position="606"/>
        <end position="628"/>
    </location>
</feature>
<feature type="topological domain" description="Mitochondrial intermembrane" evidence="3">
    <location>
        <begin position="629"/>
        <end position="631"/>
    </location>
</feature>
<feature type="domain" description="Miro 1" evidence="6">
    <location>
        <begin position="15"/>
        <end position="181"/>
    </location>
</feature>
<feature type="domain" description="EF-hand 1" evidence="5">
    <location>
        <begin position="197"/>
        <end position="232"/>
    </location>
</feature>
<feature type="domain" description="EF-hand 2" evidence="5">
    <location>
        <begin position="317"/>
        <end position="352"/>
    </location>
</feature>
<feature type="domain" description="Miro 2" evidence="6">
    <location>
        <begin position="429"/>
        <end position="592"/>
    </location>
</feature>
<feature type="binding site" evidence="2">
    <location>
        <position position="27"/>
    </location>
    <ligand>
        <name>GTP</name>
        <dbReference type="ChEBI" id="CHEBI:37565"/>
        <label>1</label>
    </ligand>
</feature>
<feature type="binding site" evidence="2">
    <location>
        <position position="29"/>
    </location>
    <ligand>
        <name>GTP</name>
        <dbReference type="ChEBI" id="CHEBI:37565"/>
        <label>1</label>
    </ligand>
</feature>
<feature type="binding site" evidence="2">
    <location>
        <position position="30"/>
    </location>
    <ligand>
        <name>GTP</name>
        <dbReference type="ChEBI" id="CHEBI:37565"/>
        <label>1</label>
    </ligand>
</feature>
<feature type="binding site" evidence="2">
    <location>
        <position position="31"/>
    </location>
    <ligand>
        <name>GTP</name>
        <dbReference type="ChEBI" id="CHEBI:37565"/>
        <label>1</label>
    </ligand>
</feature>
<feature type="binding site" evidence="2">
    <location>
        <position position="31"/>
    </location>
    <ligand>
        <name>Mg(2+)</name>
        <dbReference type="ChEBI" id="CHEBI:18420"/>
        <label>1</label>
    </ligand>
</feature>
<feature type="binding site" evidence="2">
    <location>
        <position position="32"/>
    </location>
    <ligand>
        <name>GTP</name>
        <dbReference type="ChEBI" id="CHEBI:37565"/>
        <label>1</label>
    </ligand>
</feature>
<feature type="binding site" evidence="2">
    <location>
        <position position="70"/>
    </location>
    <ligand>
        <name>Mg(2+)</name>
        <dbReference type="ChEBI" id="CHEBI:18420"/>
        <label>1</label>
    </ligand>
</feature>
<feature type="binding site" evidence="2">
    <location>
        <position position="72"/>
    </location>
    <ligand>
        <name>GTP</name>
        <dbReference type="ChEBI" id="CHEBI:37565"/>
        <label>1</label>
    </ligand>
</feature>
<feature type="binding site" evidence="2">
    <location>
        <position position="131"/>
    </location>
    <ligand>
        <name>GTP</name>
        <dbReference type="ChEBI" id="CHEBI:37565"/>
        <label>1</label>
    </ligand>
</feature>
<feature type="binding site" evidence="2">
    <location>
        <position position="132"/>
    </location>
    <ligand>
        <name>GTP</name>
        <dbReference type="ChEBI" id="CHEBI:37565"/>
        <label>1</label>
    </ligand>
</feature>
<feature type="binding site" evidence="2">
    <location>
        <position position="134"/>
    </location>
    <ligand>
        <name>GTP</name>
        <dbReference type="ChEBI" id="CHEBI:37565"/>
        <label>1</label>
    </ligand>
</feature>
<feature type="binding site" evidence="2">
    <location>
        <position position="162"/>
    </location>
    <ligand>
        <name>GTP</name>
        <dbReference type="ChEBI" id="CHEBI:37565"/>
        <label>1</label>
    </ligand>
</feature>
<feature type="binding site" evidence="2">
    <location>
        <position position="163"/>
    </location>
    <ligand>
        <name>GTP</name>
        <dbReference type="ChEBI" id="CHEBI:37565"/>
        <label>1</label>
    </ligand>
</feature>
<feature type="binding site" evidence="5">
    <location>
        <position position="210"/>
    </location>
    <ligand>
        <name>Ca(2+)</name>
        <dbReference type="ChEBI" id="CHEBI:29108"/>
        <label>1</label>
    </ligand>
</feature>
<feature type="binding site" evidence="5">
    <location>
        <position position="212"/>
    </location>
    <ligand>
        <name>Ca(2+)</name>
        <dbReference type="ChEBI" id="CHEBI:29108"/>
        <label>1</label>
    </ligand>
</feature>
<feature type="binding site" evidence="5">
    <location>
        <position position="214"/>
    </location>
    <ligand>
        <name>Ca(2+)</name>
        <dbReference type="ChEBI" id="CHEBI:29108"/>
        <label>1</label>
    </ligand>
</feature>
<feature type="binding site" evidence="5">
    <location>
        <position position="216"/>
    </location>
    <ligand>
        <name>Ca(2+)</name>
        <dbReference type="ChEBI" id="CHEBI:29108"/>
        <label>1</label>
    </ligand>
</feature>
<feature type="binding site" evidence="5">
    <location>
        <position position="221"/>
    </location>
    <ligand>
        <name>Ca(2+)</name>
        <dbReference type="ChEBI" id="CHEBI:29108"/>
        <label>1</label>
    </ligand>
</feature>
<feature type="binding site" evidence="2">
    <location>
        <position position="330"/>
    </location>
    <ligand>
        <name>Ca(2+)</name>
        <dbReference type="ChEBI" id="CHEBI:29108"/>
        <label>2</label>
    </ligand>
</feature>
<feature type="binding site" evidence="2">
    <location>
        <position position="332"/>
    </location>
    <ligand>
        <name>Ca(2+)</name>
        <dbReference type="ChEBI" id="CHEBI:29108"/>
        <label>2</label>
    </ligand>
</feature>
<feature type="binding site" evidence="2">
    <location>
        <position position="334"/>
    </location>
    <ligand>
        <name>Ca(2+)</name>
        <dbReference type="ChEBI" id="CHEBI:29108"/>
        <label>2</label>
    </ligand>
</feature>
<feature type="binding site" evidence="2">
    <location>
        <position position="336"/>
    </location>
    <ligand>
        <name>Ca(2+)</name>
        <dbReference type="ChEBI" id="CHEBI:29108"/>
        <label>2</label>
    </ligand>
</feature>
<feature type="binding site" evidence="2">
    <location>
        <position position="341"/>
    </location>
    <ligand>
        <name>Ca(2+)</name>
        <dbReference type="ChEBI" id="CHEBI:29108"/>
        <label>2</label>
    </ligand>
</feature>
<feature type="binding site" evidence="2">
    <location>
        <position position="441"/>
    </location>
    <ligand>
        <name>GTP</name>
        <dbReference type="ChEBI" id="CHEBI:37565"/>
        <label>2</label>
    </ligand>
</feature>
<feature type="binding site" evidence="2">
    <location>
        <position position="441"/>
    </location>
    <ligand>
        <name>Mg(2+)</name>
        <dbReference type="ChEBI" id="CHEBI:18420"/>
        <label>2</label>
    </ligand>
</feature>
<feature type="binding site" evidence="2">
    <location>
        <position position="442"/>
    </location>
    <ligand>
        <name>GTP</name>
        <dbReference type="ChEBI" id="CHEBI:37565"/>
        <label>2</label>
    </ligand>
</feature>
<feature type="binding site" evidence="2">
    <location>
        <position position="443"/>
    </location>
    <ligand>
        <name>GTP</name>
        <dbReference type="ChEBI" id="CHEBI:37565"/>
        <label>2</label>
    </ligand>
</feature>
<feature type="binding site" evidence="2">
    <location>
        <position position="444"/>
    </location>
    <ligand>
        <name>GTP</name>
        <dbReference type="ChEBI" id="CHEBI:37565"/>
        <label>2</label>
    </ligand>
</feature>
<feature type="binding site" evidence="2">
    <location>
        <position position="445"/>
    </location>
    <ligand>
        <name>GTP</name>
        <dbReference type="ChEBI" id="CHEBI:37565"/>
        <label>2</label>
    </ligand>
</feature>
<feature type="binding site" evidence="2">
    <location>
        <position position="446"/>
    </location>
    <ligand>
        <name>GTP</name>
        <dbReference type="ChEBI" id="CHEBI:37565"/>
        <label>2</label>
    </ligand>
</feature>
<feature type="binding site" evidence="2">
    <location>
        <position position="460"/>
    </location>
    <ligand>
        <name>GTP</name>
        <dbReference type="ChEBI" id="CHEBI:37565"/>
        <label>2</label>
    </ligand>
</feature>
<feature type="binding site" evidence="2">
    <location>
        <position position="541"/>
    </location>
    <ligand>
        <name>GTP</name>
        <dbReference type="ChEBI" id="CHEBI:37565"/>
        <label>2</label>
    </ligand>
</feature>
<feature type="binding site" evidence="2">
    <location>
        <position position="543"/>
    </location>
    <ligand>
        <name>GTP</name>
        <dbReference type="ChEBI" id="CHEBI:37565"/>
        <label>2</label>
    </ligand>
</feature>
<feature type="binding site" evidence="2">
    <location>
        <position position="571"/>
    </location>
    <ligand>
        <name>GTP</name>
        <dbReference type="ChEBI" id="CHEBI:37565"/>
        <label>2</label>
    </ligand>
</feature>
<feature type="binding site" evidence="2">
    <location>
        <position position="572"/>
    </location>
    <ligand>
        <name>GTP</name>
        <dbReference type="ChEBI" id="CHEBI:37565"/>
        <label>2</label>
    </ligand>
</feature>
<feature type="modified residue" description="N6-acetyllysine" evidence="7">
    <location>
        <position position="105"/>
    </location>
</feature>
<feature type="cross-link" description="Glycyl lysine isopeptide (Lys-Gly) (interchain with G-Cter in ubiquitin)" evidence="2">
    <location>
        <position position="166"/>
    </location>
</feature>
<feature type="cross-link" description="Glycyl lysine isopeptide (Lys-Gly) (interchain with G-Cter in ubiquitin)" evidence="2">
    <location>
        <position position="248"/>
    </location>
</feature>
<feature type="cross-link" description="Glycyl lysine isopeptide (Lys-Gly) (interchain with G-Cter in ubiquitin)" evidence="2">
    <location>
        <position position="585"/>
    </location>
</feature>
<feature type="mutagenesis site" description="Abolishes acetylation." evidence="7">
    <original>K</original>
    <variation>R</variation>
    <location>
        <position position="105"/>
    </location>
</feature>
<feature type="mutagenesis site" description="Does not affect acetylation." evidence="7">
    <original>K</original>
    <variation>R</variation>
    <location>
        <position position="525"/>
    </location>
</feature>
<feature type="mutagenesis site" description="Does not affect acetylation." evidence="7">
    <original>K</original>
    <variation>R</variation>
    <location>
        <position position="629"/>
    </location>
</feature>
<organism evidence="9">
    <name type="scientific">Rattus norvegicus</name>
    <name type="common">Rat</name>
    <dbReference type="NCBI Taxonomy" id="10116"/>
    <lineage>
        <taxon>Eukaryota</taxon>
        <taxon>Metazoa</taxon>
        <taxon>Chordata</taxon>
        <taxon>Craniata</taxon>
        <taxon>Vertebrata</taxon>
        <taxon>Euteleostomi</taxon>
        <taxon>Mammalia</taxon>
        <taxon>Eutheria</taxon>
        <taxon>Euarchontoglires</taxon>
        <taxon>Glires</taxon>
        <taxon>Rodentia</taxon>
        <taxon>Myomorpha</taxon>
        <taxon>Muroidea</taxon>
        <taxon>Muridae</taxon>
        <taxon>Murinae</taxon>
        <taxon>Rattus</taxon>
    </lineage>
</organism>
<reference evidence="9" key="1">
    <citation type="journal article" date="2004" name="Genome Res.">
        <title>The status, quality, and expansion of the NIH full-length cDNA project: the Mammalian Gene Collection (MGC).</title>
        <authorList>
            <consortium name="The MGC Project Team"/>
        </authorList>
    </citation>
    <scope>NUCLEOTIDE SEQUENCE [LARGE SCALE MRNA]</scope>
    <source>
        <tissue evidence="9">Kidney</tissue>
    </source>
</reference>
<reference evidence="10" key="2">
    <citation type="submission" date="2005-07" db="EMBL/GenBank/DDBJ databases">
        <authorList>
            <person name="Mural R.J."/>
            <person name="Adams M.D."/>
            <person name="Myers E.W."/>
            <person name="Smith H.O."/>
            <person name="Venter J.C."/>
        </authorList>
    </citation>
    <scope>NUCLEOTIDE SEQUENCE [LARGE SCALE GENOMIC DNA]</scope>
</reference>
<reference evidence="8" key="3">
    <citation type="journal article" date="2019" name="J. Cell Biol.">
        <title>Deacetylation of Miro1 by HDAC6 blocks mitochondrial transport and mediates axon growth inhibition.</title>
        <authorList>
            <person name="Kalinski A.L."/>
            <person name="Kar A.N."/>
            <person name="Craver J."/>
            <person name="Tosolini A.P."/>
            <person name="Sleigh J.N."/>
            <person name="Lee S.J."/>
            <person name="Hawthorne A."/>
            <person name="Brito-Vargas P."/>
            <person name="Miller-Randolph S."/>
            <person name="Passino R."/>
            <person name="Shi L."/>
            <person name="Wong V.S.C."/>
            <person name="Picci C."/>
            <person name="Smith D.S."/>
            <person name="Willis D.E."/>
            <person name="Havton L.A."/>
            <person name="Schiavo G."/>
            <person name="Giger R.J."/>
            <person name="Langley B."/>
            <person name="Twiss J.L."/>
        </authorList>
    </citation>
    <scope>ACETYLATION AT LYS-105</scope>
    <scope>DEACETYLATION BY HDAC6</scope>
    <scope>MUTAGENESIS OF LYS-105; LYS-525 AND LYS-629</scope>
</reference>
<comment type="function">
    <text evidence="2">Atypical mitochondrial nucleoside-triphosphatase (NTPase) involved in mitochondrial trafficking. Probably involved in control of anterograde transport of mitochondria and their subcellular distribution. Promotes mitochondrial fission during high calcium conditions. Can hydrolyze GTP, ATP and UTP.</text>
</comment>
<comment type="catalytic activity">
    <reaction evidence="2">
        <text>GTP + H2O = GDP + phosphate + H(+)</text>
        <dbReference type="Rhea" id="RHEA:19669"/>
        <dbReference type="ChEBI" id="CHEBI:15377"/>
        <dbReference type="ChEBI" id="CHEBI:15378"/>
        <dbReference type="ChEBI" id="CHEBI:37565"/>
        <dbReference type="ChEBI" id="CHEBI:43474"/>
        <dbReference type="ChEBI" id="CHEBI:58189"/>
    </reaction>
    <physiologicalReaction direction="left-to-right" evidence="2">
        <dbReference type="Rhea" id="RHEA:19670"/>
    </physiologicalReaction>
</comment>
<comment type="catalytic activity">
    <reaction evidence="2">
        <text>ATP + H2O = ADP + phosphate + H(+)</text>
        <dbReference type="Rhea" id="RHEA:13065"/>
        <dbReference type="ChEBI" id="CHEBI:15377"/>
        <dbReference type="ChEBI" id="CHEBI:15378"/>
        <dbReference type="ChEBI" id="CHEBI:30616"/>
        <dbReference type="ChEBI" id="CHEBI:43474"/>
        <dbReference type="ChEBI" id="CHEBI:456216"/>
    </reaction>
    <physiologicalReaction direction="left-to-right" evidence="2">
        <dbReference type="Rhea" id="RHEA:13066"/>
    </physiologicalReaction>
</comment>
<comment type="catalytic activity">
    <reaction evidence="2">
        <text>UTP + H2O = UDP + phosphate + H(+)</text>
        <dbReference type="Rhea" id="RHEA:64900"/>
        <dbReference type="ChEBI" id="CHEBI:15377"/>
        <dbReference type="ChEBI" id="CHEBI:15378"/>
        <dbReference type="ChEBI" id="CHEBI:43474"/>
        <dbReference type="ChEBI" id="CHEBI:46398"/>
        <dbReference type="ChEBI" id="CHEBI:58223"/>
    </reaction>
    <physiologicalReaction direction="left-to-right" evidence="2">
        <dbReference type="Rhea" id="RHEA:64901"/>
    </physiologicalReaction>
</comment>
<comment type="subunit">
    <text evidence="1 2">Homodimer. Interacts with the kinesin-binding proteins TRAK1/OIP106 and TRAK2/GRIF1, forming a link between mitochondria and the trafficking apparatus of the microtubules. Interacts with RAP1GDS1. Interacts with ARMCX1. Found in a complex with KIF5B, OGT, RHOT2 and TRAK1.</text>
</comment>
<comment type="subcellular location">
    <subcellularLocation>
        <location evidence="2">Mitochondrion outer membrane</location>
        <topology evidence="2">Single-pass type IV membrane protein</topology>
    </subcellularLocation>
    <text evidence="2">Colocalizes with MGARP and RHOT2 at the mitochondria.</text>
</comment>
<comment type="domain">
    <text evidence="2">The Miro 2 domain is necessary for efficient ubiquitination by PRKN.</text>
</comment>
<comment type="PTM">
    <text evidence="2">Ubiquitinated by PRKN during mitophagy, leading to its degradation and enhancement of mitophagy. Deubiquitinated by USP30.</text>
</comment>
<comment type="PTM">
    <text evidence="7">Acetylation on Lys-105 decreases sensitivity of mitochondrial transport to elevated Ca(2+) levels, increases mitochondrial transport and promotes axon growth (PubMed:31068376). Deacetylated by HDAC6 which blocks mitochondrial transport and mediates axon growth inhibition (PubMed:31068376).</text>
</comment>
<comment type="similarity">
    <text evidence="4">Belongs to the mitochondrial Rho GTPase family.</text>
</comment>
<protein>
    <recommendedName>
        <fullName evidence="4">Mitochondrial Rho GTPase</fullName>
        <shortName evidence="8">MIRO-1</shortName>
        <ecNumber evidence="2">3.6.5.-</ecNumber>
    </recommendedName>
    <alternativeName>
        <fullName evidence="11">Ras homolog gene family member T1</fullName>
    </alternativeName>
</protein>
<keyword id="KW-0007">Acetylation</keyword>
<keyword id="KW-0106">Calcium</keyword>
<keyword id="KW-0342">GTP-binding</keyword>
<keyword id="KW-0378">Hydrolase</keyword>
<keyword id="KW-1017">Isopeptide bond</keyword>
<keyword id="KW-0460">Magnesium</keyword>
<keyword id="KW-0472">Membrane</keyword>
<keyword id="KW-0479">Metal-binding</keyword>
<keyword id="KW-0496">Mitochondrion</keyword>
<keyword id="KW-1000">Mitochondrion outer membrane</keyword>
<keyword id="KW-0547">Nucleotide-binding</keyword>
<keyword id="KW-1185">Reference proteome</keyword>
<keyword id="KW-0677">Repeat</keyword>
<keyword id="KW-0812">Transmembrane</keyword>
<keyword id="KW-1133">Transmembrane helix</keyword>
<keyword id="KW-0832">Ubl conjugation</keyword>
<dbReference type="EC" id="3.6.5.-" evidence="2"/>
<dbReference type="EMBL" id="BC129123">
    <property type="protein sequence ID" value="AAI29124.1"/>
    <property type="molecule type" value="mRNA"/>
</dbReference>
<dbReference type="EMBL" id="CH473948">
    <property type="protein sequence ID" value="EDM05415.1"/>
    <property type="molecule type" value="Genomic_DNA"/>
</dbReference>
<dbReference type="RefSeq" id="NP_001100496.1">
    <property type="nucleotide sequence ID" value="NM_001107026.2"/>
</dbReference>
<dbReference type="SMR" id="A1L1L6"/>
<dbReference type="PaxDb" id="10116-ENSRNOP00000006218"/>
<dbReference type="PeptideAtlas" id="A1L1L6"/>
<dbReference type="GeneID" id="303351"/>
<dbReference type="KEGG" id="rno:303351"/>
<dbReference type="AGR" id="RGD:1307023"/>
<dbReference type="CTD" id="55288"/>
<dbReference type="RGD" id="1307023">
    <property type="gene designation" value="Rhot1"/>
</dbReference>
<dbReference type="VEuPathDB" id="HostDB:ENSRNOG00000004093"/>
<dbReference type="eggNOG" id="KOG1707">
    <property type="taxonomic scope" value="Eukaryota"/>
</dbReference>
<dbReference type="HOGENOM" id="CLU_014255_3_1_1"/>
<dbReference type="OrthoDB" id="5481412at2759"/>
<dbReference type="Proteomes" id="UP000002494">
    <property type="component" value="Unplaced"/>
</dbReference>
<dbReference type="Proteomes" id="UP000234681">
    <property type="component" value="Chromosome 10"/>
</dbReference>
<dbReference type="Bgee" id="ENSRNOG00000004093">
    <property type="expression patterns" value="Expressed in heart and 20 other cell types or tissues"/>
</dbReference>
<dbReference type="ExpressionAtlas" id="A1L1L6">
    <property type="expression patterns" value="baseline and differential"/>
</dbReference>
<dbReference type="GO" id="GO:0005741">
    <property type="term" value="C:mitochondrial outer membrane"/>
    <property type="evidence" value="ECO:0000266"/>
    <property type="project" value="RGD"/>
</dbReference>
<dbReference type="GO" id="GO:0005509">
    <property type="term" value="F:calcium ion binding"/>
    <property type="evidence" value="ECO:0007669"/>
    <property type="project" value="InterPro"/>
</dbReference>
<dbReference type="GO" id="GO:0005525">
    <property type="term" value="F:GTP binding"/>
    <property type="evidence" value="ECO:0007669"/>
    <property type="project" value="UniProtKB-KW"/>
</dbReference>
<dbReference type="GO" id="GO:0003924">
    <property type="term" value="F:GTPase activity"/>
    <property type="evidence" value="ECO:0007669"/>
    <property type="project" value="InterPro"/>
</dbReference>
<dbReference type="GO" id="GO:0019725">
    <property type="term" value="P:cellular homeostasis"/>
    <property type="evidence" value="ECO:0000266"/>
    <property type="project" value="RGD"/>
</dbReference>
<dbReference type="GO" id="GO:0034640">
    <property type="term" value="P:establishment of mitochondrion localization by microtubule attachment"/>
    <property type="evidence" value="ECO:0000315"/>
    <property type="project" value="RGD"/>
</dbReference>
<dbReference type="GO" id="GO:0097345">
    <property type="term" value="P:mitochondrial outer membrane permeabilization"/>
    <property type="evidence" value="ECO:0000266"/>
    <property type="project" value="RGD"/>
</dbReference>
<dbReference type="GO" id="GO:0047497">
    <property type="term" value="P:mitochondrion transport along microtubule"/>
    <property type="evidence" value="ECO:0000266"/>
    <property type="project" value="RGD"/>
</dbReference>
<dbReference type="GO" id="GO:0010821">
    <property type="term" value="P:regulation of mitochondrion organization"/>
    <property type="evidence" value="ECO:0000266"/>
    <property type="project" value="RGD"/>
</dbReference>
<dbReference type="GO" id="GO:0046928">
    <property type="term" value="P:regulation of neurotransmitter secretion"/>
    <property type="evidence" value="ECO:0000315"/>
    <property type="project" value="RGD"/>
</dbReference>
<dbReference type="GO" id="GO:1902513">
    <property type="term" value="P:regulation of organelle transport along microtubule"/>
    <property type="evidence" value="ECO:0000315"/>
    <property type="project" value="RGD"/>
</dbReference>
<dbReference type="CDD" id="cd01893">
    <property type="entry name" value="Miro1"/>
    <property type="match status" value="1"/>
</dbReference>
<dbReference type="CDD" id="cd01892">
    <property type="entry name" value="Miro2"/>
    <property type="match status" value="1"/>
</dbReference>
<dbReference type="FunFam" id="1.10.238.10:FF:000011">
    <property type="entry name" value="Mitochondrial Rho GTPase"/>
    <property type="match status" value="1"/>
</dbReference>
<dbReference type="FunFam" id="1.10.238.10:FF:000021">
    <property type="entry name" value="Mitochondrial Rho GTPase"/>
    <property type="match status" value="1"/>
</dbReference>
<dbReference type="FunFam" id="3.40.50.300:FF:000170">
    <property type="entry name" value="Mitochondrial Rho GTPase"/>
    <property type="match status" value="1"/>
</dbReference>
<dbReference type="FunFam" id="3.40.50.300:FF:000248">
    <property type="entry name" value="Mitochondrial Rho GTPase"/>
    <property type="match status" value="1"/>
</dbReference>
<dbReference type="Gene3D" id="1.10.238.10">
    <property type="entry name" value="EF-hand"/>
    <property type="match status" value="2"/>
</dbReference>
<dbReference type="Gene3D" id="3.40.50.300">
    <property type="entry name" value="P-loop containing nucleotide triphosphate hydrolases"/>
    <property type="match status" value="2"/>
</dbReference>
<dbReference type="InterPro" id="IPR011992">
    <property type="entry name" value="EF-hand-dom_pair"/>
</dbReference>
<dbReference type="InterPro" id="IPR018247">
    <property type="entry name" value="EF_Hand_1_Ca_BS"/>
</dbReference>
<dbReference type="InterPro" id="IPR013566">
    <property type="entry name" value="EF_hand_assoc_1"/>
</dbReference>
<dbReference type="InterPro" id="IPR013567">
    <property type="entry name" value="EF_hand_assoc_2"/>
</dbReference>
<dbReference type="InterPro" id="IPR002048">
    <property type="entry name" value="EF_hand_dom"/>
</dbReference>
<dbReference type="InterPro" id="IPR021181">
    <property type="entry name" value="Miro"/>
</dbReference>
<dbReference type="InterPro" id="IPR052266">
    <property type="entry name" value="Miro-EF-hand_domain"/>
</dbReference>
<dbReference type="InterPro" id="IPR020860">
    <property type="entry name" value="MIRO_dom"/>
</dbReference>
<dbReference type="InterPro" id="IPR027417">
    <property type="entry name" value="P-loop_NTPase"/>
</dbReference>
<dbReference type="InterPro" id="IPR005225">
    <property type="entry name" value="Small_GTP-bd"/>
</dbReference>
<dbReference type="InterPro" id="IPR001806">
    <property type="entry name" value="Small_GTPase"/>
</dbReference>
<dbReference type="NCBIfam" id="TIGR00231">
    <property type="entry name" value="small_GTP"/>
    <property type="match status" value="1"/>
</dbReference>
<dbReference type="PANTHER" id="PTHR46819">
    <property type="entry name" value="EF-HAND CALCIUM-BINDING DOMAIN-CONTAINING PROTEIN 7"/>
    <property type="match status" value="1"/>
</dbReference>
<dbReference type="PANTHER" id="PTHR46819:SF1">
    <property type="entry name" value="EF-HAND CALCIUM-BINDING DOMAIN-CONTAINING PROTEIN 7"/>
    <property type="match status" value="1"/>
</dbReference>
<dbReference type="Pfam" id="PF08355">
    <property type="entry name" value="EF_assoc_1"/>
    <property type="match status" value="1"/>
</dbReference>
<dbReference type="Pfam" id="PF08356">
    <property type="entry name" value="EF_assoc_2"/>
    <property type="match status" value="1"/>
</dbReference>
<dbReference type="Pfam" id="PF00071">
    <property type="entry name" value="Ras"/>
    <property type="match status" value="2"/>
</dbReference>
<dbReference type="PIRSF" id="PIRSF037488">
    <property type="entry name" value="Mt_Rho_GTPase"/>
    <property type="match status" value="1"/>
</dbReference>
<dbReference type="PRINTS" id="PR00449">
    <property type="entry name" value="RASTRNSFRMNG"/>
</dbReference>
<dbReference type="SMART" id="SM00175">
    <property type="entry name" value="RAB"/>
    <property type="match status" value="1"/>
</dbReference>
<dbReference type="SMART" id="SM00173">
    <property type="entry name" value="RAS"/>
    <property type="match status" value="1"/>
</dbReference>
<dbReference type="SMART" id="SM00174">
    <property type="entry name" value="RHO"/>
    <property type="match status" value="1"/>
</dbReference>
<dbReference type="SUPFAM" id="SSF47473">
    <property type="entry name" value="EF-hand"/>
    <property type="match status" value="1"/>
</dbReference>
<dbReference type="SUPFAM" id="SSF52540">
    <property type="entry name" value="P-loop containing nucleoside triphosphate hydrolases"/>
    <property type="match status" value="2"/>
</dbReference>
<dbReference type="PROSITE" id="PS00018">
    <property type="entry name" value="EF_HAND_1"/>
    <property type="match status" value="1"/>
</dbReference>
<dbReference type="PROSITE" id="PS50222">
    <property type="entry name" value="EF_HAND_2"/>
    <property type="match status" value="1"/>
</dbReference>
<dbReference type="PROSITE" id="PS51423">
    <property type="entry name" value="MIRO"/>
    <property type="match status" value="2"/>
</dbReference>